<name>ABLB2_PHYIT</name>
<comment type="function">
    <text evidence="2 3 6 7">Secreted effector that acts as an elicitor of hypersensitive response (HR) specifically on plants carrying defense protein Rpi-blb2 (PubMed:19794118). Enhances P.infestans colonization of Nicotiana benthamiana leaves (PubMed:30329083). Interacts with, and subsequently prevents secretion into the apoplast of the host papain-like cysteine protease C14, thus promoting virulence by interfering with the execution of host defenses (PubMed:22143776). Associates with calmodulin at the host plasma membrane to interfere with plant defense-associated calcium signaling in hosts (PubMed:30984224).</text>
</comment>
<comment type="subunit">
    <text evidence="3 7">Interacts with the host papain-like cysteine protease C14 (PubMed:22143776). Interacts with the host calmodulin (PubMed:30984224).</text>
</comment>
<comment type="subcellular location">
    <subcellularLocation>
        <location evidence="3 6 7">Secreted</location>
    </subcellularLocation>
    <subcellularLocation>
        <location evidence="3 6 7">Host cell membrane</location>
    </subcellularLocation>
    <text evidence="3">AVRblb2 localization is essential for its virulence function but not for its avirulence activity.</text>
</comment>
<comment type="induction">
    <text evidence="4 5">Expression is induced during host plant infection.</text>
</comment>
<comment type="domain">
    <text evidence="2 10">The RxLR-dEER motif acts to carry the protein into the host cell cytoplasm through binding to cell surface phosphatidylinositol-3-phosphate (Probable). The motif is not required for perception by defense protein Rpi-blb2 (PubMed:19794118).</text>
</comment>
<comment type="domain">
    <text evidence="3">The 8 residues at the C-terminus (residues 93 to 100) are required for the correct subcellular location at the cell periphery or around haustoria, the ability to enhance P.infestans growth, the association with C14 protease, and apoplastic C14 accumulation.</text>
</comment>
<comment type="domain">
    <text evidence="7">The amino acids 78-82 in the C-terminal region of are important for binding to host calmodulin.</text>
</comment>
<comment type="miscellaneous">
    <text evidence="2">The Avrblb2 protein of Phytophthora infestans is a polymorphic member of the RXLR class of secreted effectors. Especially, the polymorphic amino acid at position 69 is critical for activation of Rpi-blb2 hypersensitivity. The Avrblb2 homologs that are recognized by Rpi-blb2 have 'Val-69', 'Ala-69', or 'Ile-69', whereas the those that are not recognized have 'Phe-69'.</text>
</comment>
<comment type="similarity">
    <text evidence="9">Belongs to the RxLR effector family.</text>
</comment>
<evidence type="ECO:0000255" key="1"/>
<evidence type="ECO:0000269" key="2">
    <source>
    </source>
</evidence>
<evidence type="ECO:0000269" key="3">
    <source>
    </source>
</evidence>
<evidence type="ECO:0000269" key="4">
    <source>
    </source>
</evidence>
<evidence type="ECO:0000269" key="5">
    <source>
    </source>
</evidence>
<evidence type="ECO:0000269" key="6">
    <source>
    </source>
</evidence>
<evidence type="ECO:0000269" key="7">
    <source>
    </source>
</evidence>
<evidence type="ECO:0000303" key="8">
    <source>
    </source>
</evidence>
<evidence type="ECO:0000305" key="9"/>
<evidence type="ECO:0000305" key="10">
    <source>
    </source>
</evidence>
<accession>D0P1A8</accession>
<sequence length="100" mass="10821">MRSFLYGVLAFAVLARSSAVAAFPIPDESRPLSKTSPDTVAPRSLRIEAQEVIQSGRGDGYGGFWKNVAQSTNKIVKRPDIKIGKLIEAAKKAKAKMTKS</sequence>
<feature type="signal peptide" evidence="1">
    <location>
        <begin position="1"/>
        <end position="22"/>
    </location>
</feature>
<feature type="chain" id="PRO_5003013144" description="RxLR effector protein Avrblb2">
    <location>
        <begin position="23"/>
        <end position="100"/>
    </location>
</feature>
<feature type="short sequence motif" description="RxLR-dEER" evidence="10">
    <location>
        <begin position="43"/>
        <end position="57"/>
    </location>
</feature>
<feature type="short sequence motif" description="Calmodulin-binding motif" evidence="7">
    <location>
        <begin position="78"/>
        <end position="82"/>
    </location>
</feature>
<feature type="mutagenesis site" description="Does not affect the perception by defense protein Rpi-blb2." evidence="2">
    <original>RSLR</original>
    <variation>ASAA</variation>
    <location>
        <begin position="43"/>
        <end position="46"/>
    </location>
</feature>
<feature type="mutagenesis site" description="Impairs the interaction with host calmodulin." evidence="7">
    <original>RPDIK</original>
    <variation>AAAAA</variation>
    <location>
        <begin position="78"/>
        <end position="82"/>
    </location>
</feature>
<feature type="mutagenesis site" description="Impairs specific accumulation at the cell periphery or around haustoria, loses ability to enhance P.infestans growth, strongly decreases association with C14 protease, and fails to attenuate apoplastic C14 accumulation." evidence="3">
    <location>
        <begin position="93"/>
        <end position="100"/>
    </location>
</feature>
<protein>
    <recommendedName>
        <fullName evidence="8">RxLR effector protein Avrblb2</fullName>
    </recommendedName>
    <alternativeName>
        <fullName evidence="8">Avirulence protein Avrblb2</fullName>
    </alternativeName>
</protein>
<keyword id="KW-1032">Host cell membrane</keyword>
<keyword id="KW-1043">Host membrane</keyword>
<keyword id="KW-0472">Membrane</keyword>
<keyword id="KW-1185">Reference proteome</keyword>
<keyword id="KW-0964">Secreted</keyword>
<keyword id="KW-0732">Signal</keyword>
<keyword id="KW-0843">Virulence</keyword>
<proteinExistence type="evidence at protein level"/>
<dbReference type="EMBL" id="DS028242">
    <property type="protein sequence ID" value="EEY54134.1"/>
    <property type="molecule type" value="Genomic_DNA"/>
</dbReference>
<dbReference type="RefSeq" id="XP_002895918.1">
    <property type="nucleotide sequence ID" value="XM_002895872.1"/>
</dbReference>
<dbReference type="STRING" id="403677.D0P1A8"/>
<dbReference type="EnsemblProtists" id="PITG_20300T0">
    <property type="protein sequence ID" value="PITG_20300T0"/>
    <property type="gene ID" value="PITG_20300"/>
</dbReference>
<dbReference type="GeneID" id="9469957"/>
<dbReference type="KEGG" id="pif:PITG_20300"/>
<dbReference type="VEuPathDB" id="FungiDB:PITG_20300"/>
<dbReference type="HOGENOM" id="CLU_158959_0_0_1"/>
<dbReference type="InParanoid" id="D0P1A8"/>
<dbReference type="OrthoDB" id="127916at2759"/>
<dbReference type="PHI-base" id="PHI:10464"/>
<dbReference type="PHI-base" id="PHI:10638"/>
<dbReference type="Proteomes" id="UP000006643">
    <property type="component" value="Partially assembled WGS sequence"/>
</dbReference>
<dbReference type="GO" id="GO:0005576">
    <property type="term" value="C:extracellular region"/>
    <property type="evidence" value="ECO:0007669"/>
    <property type="project" value="UniProtKB-SubCell"/>
</dbReference>
<dbReference type="GO" id="GO:0020002">
    <property type="term" value="C:host cell plasma membrane"/>
    <property type="evidence" value="ECO:0007669"/>
    <property type="project" value="UniProtKB-SubCell"/>
</dbReference>
<dbReference type="GO" id="GO:0016020">
    <property type="term" value="C:membrane"/>
    <property type="evidence" value="ECO:0007669"/>
    <property type="project" value="UniProtKB-KW"/>
</dbReference>
<gene>
    <name evidence="8" type="primary">Avrblb2</name>
    <name evidence="8" type="synonym">PexRD39</name>
    <name evidence="8" type="synonym">PexRD40</name>
    <name type="ORF">PITG_20300</name>
</gene>
<reference key="1">
    <citation type="journal article" date="2009" name="Nature">
        <title>Genome sequence and analysis of the Irish potato famine pathogen Phytophthora infestans.</title>
        <authorList>
            <consortium name="The Broad Institute Genome Sequencing Platform"/>
            <person name="Haas B.J."/>
            <person name="Kamoun S."/>
            <person name="Zody M.C."/>
            <person name="Jiang R.H."/>
            <person name="Handsaker R.E."/>
            <person name="Cano L.M."/>
            <person name="Grabherr M."/>
            <person name="Kodira C.D."/>
            <person name="Raffaele S."/>
            <person name="Torto-Alalibo T."/>
            <person name="Bozkurt T.O."/>
            <person name="Ah-Fong A.M."/>
            <person name="Alvarado L."/>
            <person name="Anderson V.L."/>
            <person name="Armstrong M.R."/>
            <person name="Avrova A."/>
            <person name="Baxter L."/>
            <person name="Beynon J."/>
            <person name="Boevink P.C."/>
            <person name="Bollmann S.R."/>
            <person name="Bos J.I."/>
            <person name="Bulone V."/>
            <person name="Cai G."/>
            <person name="Cakir C."/>
            <person name="Carrington J.C."/>
            <person name="Chawner M."/>
            <person name="Conti L."/>
            <person name="Costanzo S."/>
            <person name="Ewan R."/>
            <person name="Fahlgren N."/>
            <person name="Fischbach M.A."/>
            <person name="Fugelstad J."/>
            <person name="Gilroy E.M."/>
            <person name="Gnerre S."/>
            <person name="Green P.J."/>
            <person name="Grenville-Briggs L.J."/>
            <person name="Griffith J."/>
            <person name="Grunwald N.J."/>
            <person name="Horn K."/>
            <person name="Horner N.R."/>
            <person name="Hu C.H."/>
            <person name="Huitema E."/>
            <person name="Jeong D.H."/>
            <person name="Jones A.M."/>
            <person name="Jones J.D."/>
            <person name="Jones R.W."/>
            <person name="Karlsson E.K."/>
            <person name="Kunjeti S.G."/>
            <person name="Lamour K."/>
            <person name="Liu Z."/>
            <person name="Ma L."/>
            <person name="Maclean D."/>
            <person name="Chibucos M.C."/>
            <person name="McDonald H."/>
            <person name="McWalters J."/>
            <person name="Meijer H.J."/>
            <person name="Morgan W."/>
            <person name="Morris P.F."/>
            <person name="Munro C.A."/>
            <person name="O'Neill K."/>
            <person name="Ospina-Giraldo M."/>
            <person name="Pinzon A."/>
            <person name="Pritchard L."/>
            <person name="Ramsahoye B."/>
            <person name="Ren Q."/>
            <person name="Restrepo S."/>
            <person name="Roy S."/>
            <person name="Sadanandom A."/>
            <person name="Savidor A."/>
            <person name="Schornack S."/>
            <person name="Schwartz D.C."/>
            <person name="Schumann U.D."/>
            <person name="Schwessinger B."/>
            <person name="Seyer L."/>
            <person name="Sharpe T."/>
            <person name="Silvar C."/>
            <person name="Song J."/>
            <person name="Studholme D.J."/>
            <person name="Sykes S."/>
            <person name="Thines M."/>
            <person name="van de Vondervoort P.J."/>
            <person name="Phuntumart V."/>
            <person name="Wawra S."/>
            <person name="Weide R."/>
            <person name="Win J."/>
            <person name="Young C."/>
            <person name="Zhou S."/>
            <person name="Fry W."/>
            <person name="Meyers B.C."/>
            <person name="van West P."/>
            <person name="Ristaino J."/>
            <person name="Govers F."/>
            <person name="Birch P.R."/>
            <person name="Whisson S.C."/>
            <person name="Judelson H.S."/>
            <person name="Nusbaum C."/>
        </authorList>
    </citation>
    <scope>NUCLEOTIDE SEQUENCE [LARGE SCALE GENOMIC DNA]</scope>
    <source>
        <strain>T30-4</strain>
    </source>
</reference>
<reference key="2">
    <citation type="journal article" date="2009" name="Plant Cell">
        <title>In planta expression screens of Phytophthora infestans RXLR effectors reveal diverse phenotypes, including activation of the Solanum bulbocastanum disease resistance protein Rpi-blb2.</title>
        <authorList>
            <person name="Oh S.K."/>
            <person name="Young C."/>
            <person name="Lee M."/>
            <person name="Oliva R."/>
            <person name="Bozkurt T.O."/>
            <person name="Cano L.M."/>
            <person name="Win J."/>
            <person name="Bos J.I."/>
            <person name="Liu H.Y."/>
            <person name="van Damme M."/>
            <person name="Morgan W."/>
            <person name="Choi D."/>
            <person name="Van der Vossen E.A."/>
            <person name="Vleeshouwers V.G."/>
            <person name="Kamoun S."/>
        </authorList>
    </citation>
    <scope>INDUCTION</scope>
    <scope>FUNCTION</scope>
    <scope>DOMAIN</scope>
    <scope>MUTAGENESIS OF 43-ARG--ARG-46</scope>
</reference>
<reference key="3">
    <citation type="journal article" date="2011" name="Proc. Natl. Acad. Sci. U.S.A.">
        <title>Phytophthora infestans effector AVRblb2 prevents secretion of a plant immune protease at the haustorial interface.</title>
        <authorList>
            <person name="Bozkurt T.O."/>
            <person name="Schornack S."/>
            <person name="Win J."/>
            <person name="Shindo T."/>
            <person name="Ilyas M."/>
            <person name="Oliva R."/>
            <person name="Cano L.M."/>
            <person name="Jones A.M."/>
            <person name="Huitema E."/>
            <person name="van der Hoorn R.A."/>
            <person name="Kamoun S."/>
        </authorList>
    </citation>
    <scope>FUNCTION</scope>
    <scope>SUBCELLULAR LOCATION</scope>
    <scope>INTERACTION WITH HOST C14 PROTEASE</scope>
    <scope>MUTAGENESIS OF 93-ALA--SER-100</scope>
</reference>
<reference key="4">
    <citation type="journal article" date="2017" name="BMC Genomics">
        <title>RNA-seq of life stages of the oomycete Phytophthora infestans reveals dynamic changes in metabolic, signal transduction, and pathogenesis genes and a major role for calcium signaling in development.</title>
        <authorList>
            <person name="Ah-Fong A.M."/>
            <person name="Kim K.S."/>
            <person name="Judelson H.S."/>
        </authorList>
    </citation>
    <scope>INDUCTION</scope>
</reference>
<reference key="5">
    <citation type="journal article" date="2017" name="Front. Plant Sci.">
        <title>Conserved RXLR effector genes of Phytophthora infestans expressed at the early stage of potato infection are suppressive to host defense.</title>
        <authorList>
            <person name="Yin J."/>
            <person name="Gu B."/>
            <person name="Huang G."/>
            <person name="Tian Y."/>
            <person name="Quan J."/>
            <person name="Lindqvist-Kreuze H."/>
            <person name="Shan W."/>
        </authorList>
    </citation>
    <scope>INDUCTION</scope>
</reference>
<reference key="6">
    <citation type="journal article" date="2019" name="Front. Plant Sci.">
        <title>The Phytophthora RXLR Effector Avrblb2 Modulates Plant Immunity by Interfering With Ca2+ Signaling Pathway.</title>
        <authorList>
            <person name="Naveed Z.A."/>
            <person name="Bibi S."/>
            <person name="Ali G.S."/>
        </authorList>
    </citation>
    <scope>INTERACTION WITH HOST CALMODULIN</scope>
    <scope>SUBCELLULAR LOCATION</scope>
    <scope>FUNCTION</scope>
    <scope>DOMAIN</scope>
    <scope>MUTAGENESIS OF 78-ARG--LYS-82</scope>
</reference>
<reference key="7">
    <citation type="journal article" date="2019" name="J. Exp. Bot.">
        <title>Phytophthora infestans RXLR effectors act in concert at diverse subcellular locations to enhance host colonization.</title>
        <authorList>
            <person name="Wang S."/>
            <person name="McLellan H."/>
            <person name="Bukharova T."/>
            <person name="He Q."/>
            <person name="Murphy F."/>
            <person name="Shi J."/>
            <person name="Sun S."/>
            <person name="van Weymers P."/>
            <person name="Ren Y."/>
            <person name="Thilliez G."/>
            <person name="Wang H."/>
            <person name="Chen X."/>
            <person name="Engelhardt S."/>
            <person name="Vleeshouwers V."/>
            <person name="Gilroy E.M."/>
            <person name="Whisson S.C."/>
            <person name="Hein I."/>
            <person name="Wang X."/>
            <person name="Tian Z."/>
            <person name="Birch P.R.J."/>
            <person name="Boevink P.C."/>
        </authorList>
    </citation>
    <scope>SUBCELLULAR LOCATION</scope>
    <scope>FUNCTION</scope>
</reference>
<organism>
    <name type="scientific">Phytophthora infestans (strain T30-4)</name>
    <name type="common">Potato late blight agent</name>
    <dbReference type="NCBI Taxonomy" id="403677"/>
    <lineage>
        <taxon>Eukaryota</taxon>
        <taxon>Sar</taxon>
        <taxon>Stramenopiles</taxon>
        <taxon>Oomycota</taxon>
        <taxon>Peronosporales</taxon>
        <taxon>Peronosporaceae</taxon>
        <taxon>Phytophthora</taxon>
    </lineage>
</organism>